<dbReference type="EC" id="2.1.2.10" evidence="1"/>
<dbReference type="EMBL" id="CP000554">
    <property type="protein sequence ID" value="ABM79683.1"/>
    <property type="molecule type" value="Genomic_DNA"/>
</dbReference>
<dbReference type="RefSeq" id="WP_011827521.1">
    <property type="nucleotide sequence ID" value="NC_008820.1"/>
</dbReference>
<dbReference type="SMR" id="A2CDX3"/>
<dbReference type="STRING" id="59922.P9303_29531"/>
<dbReference type="KEGG" id="pmf:P9303_29531"/>
<dbReference type="HOGENOM" id="CLU_007884_10_2_3"/>
<dbReference type="BioCyc" id="PMAR59922:G1G80-2593-MONOMER"/>
<dbReference type="Proteomes" id="UP000002274">
    <property type="component" value="Chromosome"/>
</dbReference>
<dbReference type="GO" id="GO:0005829">
    <property type="term" value="C:cytosol"/>
    <property type="evidence" value="ECO:0007669"/>
    <property type="project" value="TreeGrafter"/>
</dbReference>
<dbReference type="GO" id="GO:0005960">
    <property type="term" value="C:glycine cleavage complex"/>
    <property type="evidence" value="ECO:0007669"/>
    <property type="project" value="InterPro"/>
</dbReference>
<dbReference type="GO" id="GO:0004047">
    <property type="term" value="F:aminomethyltransferase activity"/>
    <property type="evidence" value="ECO:0007669"/>
    <property type="project" value="UniProtKB-UniRule"/>
</dbReference>
<dbReference type="GO" id="GO:0008483">
    <property type="term" value="F:transaminase activity"/>
    <property type="evidence" value="ECO:0007669"/>
    <property type="project" value="UniProtKB-KW"/>
</dbReference>
<dbReference type="GO" id="GO:0019464">
    <property type="term" value="P:glycine decarboxylation via glycine cleavage system"/>
    <property type="evidence" value="ECO:0007669"/>
    <property type="project" value="UniProtKB-UniRule"/>
</dbReference>
<dbReference type="FunFam" id="2.40.30.110:FF:000003">
    <property type="entry name" value="Aminomethyltransferase"/>
    <property type="match status" value="1"/>
</dbReference>
<dbReference type="FunFam" id="3.30.70.1400:FF:000001">
    <property type="entry name" value="Aminomethyltransferase"/>
    <property type="match status" value="1"/>
</dbReference>
<dbReference type="FunFam" id="4.10.1250.10:FF:000001">
    <property type="entry name" value="Aminomethyltransferase"/>
    <property type="match status" value="1"/>
</dbReference>
<dbReference type="Gene3D" id="2.40.30.110">
    <property type="entry name" value="Aminomethyltransferase beta-barrel domains"/>
    <property type="match status" value="1"/>
</dbReference>
<dbReference type="Gene3D" id="3.30.70.1400">
    <property type="entry name" value="Aminomethyltransferase beta-barrel domains"/>
    <property type="match status" value="1"/>
</dbReference>
<dbReference type="Gene3D" id="4.10.1250.10">
    <property type="entry name" value="Aminomethyltransferase fragment"/>
    <property type="match status" value="1"/>
</dbReference>
<dbReference type="Gene3D" id="3.30.1360.120">
    <property type="entry name" value="Probable tRNA modification gtpase trme, domain 1"/>
    <property type="match status" value="1"/>
</dbReference>
<dbReference type="HAMAP" id="MF_00259">
    <property type="entry name" value="GcvT"/>
    <property type="match status" value="1"/>
</dbReference>
<dbReference type="InterPro" id="IPR006223">
    <property type="entry name" value="GCS_T"/>
</dbReference>
<dbReference type="InterPro" id="IPR022903">
    <property type="entry name" value="GCS_T_bac"/>
</dbReference>
<dbReference type="InterPro" id="IPR013977">
    <property type="entry name" value="GCST_C"/>
</dbReference>
<dbReference type="InterPro" id="IPR006222">
    <property type="entry name" value="GCV_T_N"/>
</dbReference>
<dbReference type="InterPro" id="IPR028896">
    <property type="entry name" value="GcvT/YgfZ/DmdA"/>
</dbReference>
<dbReference type="InterPro" id="IPR029043">
    <property type="entry name" value="GcvT/YgfZ_C"/>
</dbReference>
<dbReference type="InterPro" id="IPR027266">
    <property type="entry name" value="TrmE/GcvT_dom1"/>
</dbReference>
<dbReference type="NCBIfam" id="TIGR00528">
    <property type="entry name" value="gcvT"/>
    <property type="match status" value="1"/>
</dbReference>
<dbReference type="NCBIfam" id="NF001567">
    <property type="entry name" value="PRK00389.1"/>
    <property type="match status" value="1"/>
</dbReference>
<dbReference type="PANTHER" id="PTHR43757">
    <property type="entry name" value="AMINOMETHYLTRANSFERASE"/>
    <property type="match status" value="1"/>
</dbReference>
<dbReference type="PANTHER" id="PTHR43757:SF2">
    <property type="entry name" value="AMINOMETHYLTRANSFERASE, MITOCHONDRIAL"/>
    <property type="match status" value="1"/>
</dbReference>
<dbReference type="Pfam" id="PF01571">
    <property type="entry name" value="GCV_T"/>
    <property type="match status" value="1"/>
</dbReference>
<dbReference type="Pfam" id="PF08669">
    <property type="entry name" value="GCV_T_C"/>
    <property type="match status" value="1"/>
</dbReference>
<dbReference type="PIRSF" id="PIRSF006487">
    <property type="entry name" value="GcvT"/>
    <property type="match status" value="1"/>
</dbReference>
<dbReference type="SUPFAM" id="SSF101790">
    <property type="entry name" value="Aminomethyltransferase beta-barrel domain"/>
    <property type="match status" value="1"/>
</dbReference>
<dbReference type="SUPFAM" id="SSF103025">
    <property type="entry name" value="Folate-binding domain"/>
    <property type="match status" value="1"/>
</dbReference>
<name>GCST_PROM3</name>
<accession>A2CDX3</accession>
<reference key="1">
    <citation type="journal article" date="2007" name="PLoS Genet.">
        <title>Patterns and implications of gene gain and loss in the evolution of Prochlorococcus.</title>
        <authorList>
            <person name="Kettler G.C."/>
            <person name="Martiny A.C."/>
            <person name="Huang K."/>
            <person name="Zucker J."/>
            <person name="Coleman M.L."/>
            <person name="Rodrigue S."/>
            <person name="Chen F."/>
            <person name="Lapidus A."/>
            <person name="Ferriera S."/>
            <person name="Johnson J."/>
            <person name="Steglich C."/>
            <person name="Church G.M."/>
            <person name="Richardson P."/>
            <person name="Chisholm S.W."/>
        </authorList>
    </citation>
    <scope>NUCLEOTIDE SEQUENCE [LARGE SCALE GENOMIC DNA]</scope>
    <source>
        <strain>MIT 9303</strain>
    </source>
</reference>
<sequence>MNLQHTPLHDLCRDAGGRMVPFAGWDMPVQFSGLLQEHQAVRQQVGMFDISHMGVLRLEGTNPKDTLQALVPTDLNRIGPGEACYTVLLNETGGILDDLVVYDLGTNKQDSQSLLIVINAACSETDTIWLKQHLQPAGIALSDAKNNGVLLALQGPQATKVLERLSGESLASLPRFGHRQVQFYGLGAEDPSSVFIARTGYTGEDGFELLLEAEAGRALWLQLRAEGVIPCGLGSRDTLRLEAAMHLYGQDMDINTTPFEAGLGWLVHLEMPAPFMGRTALEQQAEQGPIRRLVGLKLSGRAIARHGYPLLHNNNKVGEITSGTWSPSLGEAIALGYLPTALARIGNEVAVEIRGKHHPATVVKRPFYRRPSLS</sequence>
<feature type="chain" id="PRO_1000047688" description="Aminomethyltransferase">
    <location>
        <begin position="1"/>
        <end position="374"/>
    </location>
</feature>
<evidence type="ECO:0000255" key="1">
    <source>
        <dbReference type="HAMAP-Rule" id="MF_00259"/>
    </source>
</evidence>
<keyword id="KW-0032">Aminotransferase</keyword>
<keyword id="KW-0808">Transferase</keyword>
<organism>
    <name type="scientific">Prochlorococcus marinus (strain MIT 9303)</name>
    <dbReference type="NCBI Taxonomy" id="59922"/>
    <lineage>
        <taxon>Bacteria</taxon>
        <taxon>Bacillati</taxon>
        <taxon>Cyanobacteriota</taxon>
        <taxon>Cyanophyceae</taxon>
        <taxon>Synechococcales</taxon>
        <taxon>Prochlorococcaceae</taxon>
        <taxon>Prochlorococcus</taxon>
    </lineage>
</organism>
<comment type="function">
    <text evidence="1">The glycine cleavage system catalyzes the degradation of glycine.</text>
</comment>
<comment type="catalytic activity">
    <reaction evidence="1">
        <text>N(6)-[(R)-S(8)-aminomethyldihydrolipoyl]-L-lysyl-[protein] + (6S)-5,6,7,8-tetrahydrofolate = N(6)-[(R)-dihydrolipoyl]-L-lysyl-[protein] + (6R)-5,10-methylene-5,6,7,8-tetrahydrofolate + NH4(+)</text>
        <dbReference type="Rhea" id="RHEA:16945"/>
        <dbReference type="Rhea" id="RHEA-COMP:10475"/>
        <dbReference type="Rhea" id="RHEA-COMP:10492"/>
        <dbReference type="ChEBI" id="CHEBI:15636"/>
        <dbReference type="ChEBI" id="CHEBI:28938"/>
        <dbReference type="ChEBI" id="CHEBI:57453"/>
        <dbReference type="ChEBI" id="CHEBI:83100"/>
        <dbReference type="ChEBI" id="CHEBI:83143"/>
        <dbReference type="EC" id="2.1.2.10"/>
    </reaction>
</comment>
<comment type="subunit">
    <text evidence="1">The glycine cleavage system is composed of four proteins: P, T, L and H.</text>
</comment>
<comment type="similarity">
    <text evidence="1">Belongs to the GcvT family.</text>
</comment>
<protein>
    <recommendedName>
        <fullName evidence="1">Aminomethyltransferase</fullName>
        <ecNumber evidence="1">2.1.2.10</ecNumber>
    </recommendedName>
    <alternativeName>
        <fullName evidence="1">Glycine cleavage system T protein</fullName>
    </alternativeName>
</protein>
<proteinExistence type="inferred from homology"/>
<gene>
    <name evidence="1" type="primary">gcvT</name>
    <name type="ordered locus">P9303_29531</name>
</gene>